<dbReference type="EC" id="7.1.1.-" evidence="1"/>
<dbReference type="EMBL" id="CP000238">
    <property type="protein sequence ID" value="ABF13823.1"/>
    <property type="molecule type" value="Genomic_DNA"/>
</dbReference>
<dbReference type="RefSeq" id="WP_011520552.1">
    <property type="nucleotide sequence ID" value="NC_007984.1"/>
</dbReference>
<dbReference type="SMR" id="Q1LT95"/>
<dbReference type="STRING" id="374463.BCI_0375"/>
<dbReference type="KEGG" id="bci:BCI_0375"/>
<dbReference type="HOGENOM" id="CLU_015134_0_1_6"/>
<dbReference type="Proteomes" id="UP000002427">
    <property type="component" value="Chromosome"/>
</dbReference>
<dbReference type="GO" id="GO:0005886">
    <property type="term" value="C:plasma membrane"/>
    <property type="evidence" value="ECO:0007669"/>
    <property type="project" value="UniProtKB-SubCell"/>
</dbReference>
<dbReference type="GO" id="GO:0003954">
    <property type="term" value="F:NADH dehydrogenase activity"/>
    <property type="evidence" value="ECO:0007669"/>
    <property type="project" value="TreeGrafter"/>
</dbReference>
<dbReference type="GO" id="GO:0016655">
    <property type="term" value="F:oxidoreductase activity, acting on NAD(P)H, quinone or similar compound as acceptor"/>
    <property type="evidence" value="ECO:0007669"/>
    <property type="project" value="UniProtKB-UniRule"/>
</dbReference>
<dbReference type="GO" id="GO:0048038">
    <property type="term" value="F:quinone binding"/>
    <property type="evidence" value="ECO:0007669"/>
    <property type="project" value="UniProtKB-KW"/>
</dbReference>
<dbReference type="GO" id="GO:0009060">
    <property type="term" value="P:aerobic respiration"/>
    <property type="evidence" value="ECO:0007669"/>
    <property type="project" value="TreeGrafter"/>
</dbReference>
<dbReference type="HAMAP" id="MF_01350">
    <property type="entry name" value="NDH1_NuoH"/>
    <property type="match status" value="1"/>
</dbReference>
<dbReference type="InterPro" id="IPR001694">
    <property type="entry name" value="NADH_UbQ_OxRdtase_su1/FPO"/>
</dbReference>
<dbReference type="InterPro" id="IPR018086">
    <property type="entry name" value="NADH_UbQ_OxRdtase_su1_CS"/>
</dbReference>
<dbReference type="NCBIfam" id="NF004740">
    <property type="entry name" value="PRK06076.1-1"/>
    <property type="match status" value="1"/>
</dbReference>
<dbReference type="NCBIfam" id="NF004741">
    <property type="entry name" value="PRK06076.1-2"/>
    <property type="match status" value="1"/>
</dbReference>
<dbReference type="PANTHER" id="PTHR11432">
    <property type="entry name" value="NADH DEHYDROGENASE SUBUNIT 1"/>
    <property type="match status" value="1"/>
</dbReference>
<dbReference type="PANTHER" id="PTHR11432:SF3">
    <property type="entry name" value="NADH-UBIQUINONE OXIDOREDUCTASE CHAIN 1"/>
    <property type="match status" value="1"/>
</dbReference>
<dbReference type="Pfam" id="PF00146">
    <property type="entry name" value="NADHdh"/>
    <property type="match status" value="1"/>
</dbReference>
<dbReference type="PROSITE" id="PS00668">
    <property type="entry name" value="COMPLEX1_ND1_2"/>
    <property type="match status" value="1"/>
</dbReference>
<gene>
    <name evidence="1" type="primary">nuoH</name>
    <name type="ordered locus">BCI_0375</name>
</gene>
<comment type="function">
    <text evidence="1">NDH-1 shuttles electrons from NADH, via FMN and iron-sulfur (Fe-S) centers, to quinones in the respiratory chain. The immediate electron acceptor for the enzyme in this species is believed to be ubiquinone. Couples the redox reaction to proton translocation (for every two electrons transferred, four hydrogen ions are translocated across the cytoplasmic membrane), and thus conserves the redox energy in a proton gradient. This subunit may bind ubiquinone.</text>
</comment>
<comment type="catalytic activity">
    <reaction evidence="1">
        <text>a quinone + NADH + 5 H(+)(in) = a quinol + NAD(+) + 4 H(+)(out)</text>
        <dbReference type="Rhea" id="RHEA:57888"/>
        <dbReference type="ChEBI" id="CHEBI:15378"/>
        <dbReference type="ChEBI" id="CHEBI:24646"/>
        <dbReference type="ChEBI" id="CHEBI:57540"/>
        <dbReference type="ChEBI" id="CHEBI:57945"/>
        <dbReference type="ChEBI" id="CHEBI:132124"/>
    </reaction>
</comment>
<comment type="subunit">
    <text evidence="1">NDH-1 is composed of 14 different subunits. Subunits NuoA, H, J, K, L, M, N constitute the membrane sector of the complex.</text>
</comment>
<comment type="subcellular location">
    <subcellularLocation>
        <location evidence="1">Cell membrane</location>
        <topology evidence="1">Multi-pass membrane protein</topology>
    </subcellularLocation>
</comment>
<comment type="similarity">
    <text evidence="1">Belongs to the complex I subunit 1 family.</text>
</comment>
<reference key="1">
    <citation type="journal article" date="2006" name="PLoS Biol.">
        <title>Metabolic complementarity and genomics of the dual bacterial symbiosis of sharpshooters.</title>
        <authorList>
            <person name="Wu D."/>
            <person name="Daugherty S.C."/>
            <person name="Van Aken S.E."/>
            <person name="Pai G.H."/>
            <person name="Watkins K.L."/>
            <person name="Khouri H."/>
            <person name="Tallon L.J."/>
            <person name="Zaborsky J.M."/>
            <person name="Dunbar H.E."/>
            <person name="Tran P.L."/>
            <person name="Moran N.A."/>
            <person name="Eisen J.A."/>
        </authorList>
    </citation>
    <scope>NUCLEOTIDE SEQUENCE [LARGE SCALE GENOMIC DNA]</scope>
</reference>
<name>NUOH_BAUCH</name>
<accession>Q1LT95</accession>
<evidence type="ECO:0000255" key="1">
    <source>
        <dbReference type="HAMAP-Rule" id="MF_01350"/>
    </source>
</evidence>
<feature type="chain" id="PRO_0000298795" description="NADH-quinone oxidoreductase subunit H">
    <location>
        <begin position="1"/>
        <end position="321"/>
    </location>
</feature>
<feature type="transmembrane region" description="Helical" evidence="1">
    <location>
        <begin position="9"/>
        <end position="29"/>
    </location>
</feature>
<feature type="transmembrane region" description="Helical" evidence="1">
    <location>
        <begin position="78"/>
        <end position="98"/>
    </location>
</feature>
<feature type="transmembrane region" description="Helical" evidence="1">
    <location>
        <begin position="111"/>
        <end position="131"/>
    </location>
</feature>
<feature type="transmembrane region" description="Helical" evidence="1">
    <location>
        <begin position="156"/>
        <end position="176"/>
    </location>
</feature>
<feature type="transmembrane region" description="Helical" evidence="1">
    <location>
        <begin position="183"/>
        <end position="203"/>
    </location>
</feature>
<feature type="transmembrane region" description="Helical" evidence="1">
    <location>
        <begin position="234"/>
        <end position="254"/>
    </location>
</feature>
<feature type="transmembrane region" description="Helical" evidence="1">
    <location>
        <begin position="262"/>
        <end position="282"/>
    </location>
</feature>
<feature type="transmembrane region" description="Helical" evidence="1">
    <location>
        <begin position="296"/>
        <end position="316"/>
    </location>
</feature>
<proteinExistence type="inferred from homology"/>
<organism>
    <name type="scientific">Baumannia cicadellinicola subsp. Homalodisca coagulata</name>
    <dbReference type="NCBI Taxonomy" id="374463"/>
    <lineage>
        <taxon>Bacteria</taxon>
        <taxon>Pseudomonadati</taxon>
        <taxon>Pseudomonadota</taxon>
        <taxon>Gammaproteobacteria</taxon>
        <taxon>Candidatus Palibaumannia</taxon>
    </lineage>
</organism>
<keyword id="KW-1003">Cell membrane</keyword>
<keyword id="KW-0472">Membrane</keyword>
<keyword id="KW-0520">NAD</keyword>
<keyword id="KW-0874">Quinone</keyword>
<keyword id="KW-1185">Reference proteome</keyword>
<keyword id="KW-1278">Translocase</keyword>
<keyword id="KW-0812">Transmembrane</keyword>
<keyword id="KW-1133">Transmembrane helix</keyword>
<keyword id="KW-0830">Ubiquinone</keyword>
<protein>
    <recommendedName>
        <fullName evidence="1">NADH-quinone oxidoreductase subunit H</fullName>
        <ecNumber evidence="1">7.1.1.-</ecNumber>
    </recommendedName>
    <alternativeName>
        <fullName evidence="1">NADH dehydrogenase I subunit H</fullName>
    </alternativeName>
    <alternativeName>
        <fullName evidence="1">NDH-1 subunit H</fullName>
    </alternativeName>
</protein>
<sequence>MLHLRYEYLLAIVKAIVTLLSVVTIGAYMSFFERRLLGLFQHRYGPNRVGWGGSLQLLADTIKILFKEDWIPPFADRIIFTLAPIIAFTSLLLVFAIMPISPNWVVIELNIGILFFLMMAGISVYAILLGGWSSNNKYSLLGAMRAAAQTLSYEVFLGLSIMGVVAQAGSFNISTIVADQTHIWNIVPQFFGFITFYLAGLAICHRHPFDQPESEQELADGYHIEYSGMKFGLFFIGEYISLVTISALTITLFFGGWQGPWLPPYIWFIIKTTVFIIIFILIRAALPRPRYDQVMILGWTICLPLTLMNLLVTAIVILYNT</sequence>